<proteinExistence type="inferred from homology"/>
<protein>
    <recommendedName>
        <fullName evidence="1">Large ribosomal subunit protein uL10</fullName>
    </recommendedName>
    <alternativeName>
        <fullName evidence="2">50S ribosomal protein L10</fullName>
    </alternativeName>
</protein>
<name>RL10_BUCAP</name>
<accession>Q8KA68</accession>
<keyword id="KW-0687">Ribonucleoprotein</keyword>
<keyword id="KW-0689">Ribosomal protein</keyword>
<keyword id="KW-0694">RNA-binding</keyword>
<keyword id="KW-0699">rRNA-binding</keyword>
<sequence length="165" mass="18273">MALNLSKKKTIVSKINQISNLALSAIIANSQGISVNKINELRKSGREIGVKMSIVRNTLLSLAIENTAFKCLKKKLKGSTFIAYSTKHPGSGARLFKEFEKKNKKFKITGAVFEGKLLSELEINQLADMPTYEEAIRKLLLTLKISIAGKLIYTLSAIKEKKETS</sequence>
<comment type="function">
    <text evidence="1">Forms part of the ribosomal stalk, playing a central role in the interaction of the ribosome with GTP-bound translation factors.</text>
</comment>
<comment type="subunit">
    <text evidence="1">Part of the ribosomal stalk of the 50S ribosomal subunit. The N-terminus interacts with L11 and the large rRNA to form the base of the stalk. The C-terminus forms an elongated spine to which L12 dimers bind in a sequential fashion forming a multimeric L10(L12)X complex.</text>
</comment>
<comment type="similarity">
    <text evidence="1">Belongs to the universal ribosomal protein uL10 family.</text>
</comment>
<feature type="chain" id="PRO_0000154603" description="Large ribosomal subunit protein uL10">
    <location>
        <begin position="1"/>
        <end position="165"/>
    </location>
</feature>
<evidence type="ECO:0000255" key="1">
    <source>
        <dbReference type="HAMAP-Rule" id="MF_00362"/>
    </source>
</evidence>
<evidence type="ECO:0000305" key="2"/>
<gene>
    <name evidence="1" type="primary">rplJ</name>
    <name type="ordered locus">BUsg_037</name>
</gene>
<organism>
    <name type="scientific">Buchnera aphidicola subsp. Schizaphis graminum (strain Sg)</name>
    <dbReference type="NCBI Taxonomy" id="198804"/>
    <lineage>
        <taxon>Bacteria</taxon>
        <taxon>Pseudomonadati</taxon>
        <taxon>Pseudomonadota</taxon>
        <taxon>Gammaproteobacteria</taxon>
        <taxon>Enterobacterales</taxon>
        <taxon>Erwiniaceae</taxon>
        <taxon>Buchnera</taxon>
    </lineage>
</organism>
<dbReference type="EMBL" id="AE013218">
    <property type="protein sequence ID" value="AAM67608.1"/>
    <property type="molecule type" value="Genomic_DNA"/>
</dbReference>
<dbReference type="RefSeq" id="WP_011053574.1">
    <property type="nucleotide sequence ID" value="NC_004061.1"/>
</dbReference>
<dbReference type="STRING" id="198804.BUsg_037"/>
<dbReference type="GeneID" id="93003500"/>
<dbReference type="KEGG" id="bas:BUsg_037"/>
<dbReference type="eggNOG" id="COG0244">
    <property type="taxonomic scope" value="Bacteria"/>
</dbReference>
<dbReference type="HOGENOM" id="CLU_092227_0_2_6"/>
<dbReference type="Proteomes" id="UP000000416">
    <property type="component" value="Chromosome"/>
</dbReference>
<dbReference type="GO" id="GO:0015934">
    <property type="term" value="C:large ribosomal subunit"/>
    <property type="evidence" value="ECO:0007669"/>
    <property type="project" value="InterPro"/>
</dbReference>
<dbReference type="GO" id="GO:0070180">
    <property type="term" value="F:large ribosomal subunit rRNA binding"/>
    <property type="evidence" value="ECO:0007669"/>
    <property type="project" value="UniProtKB-UniRule"/>
</dbReference>
<dbReference type="GO" id="GO:0003735">
    <property type="term" value="F:structural constituent of ribosome"/>
    <property type="evidence" value="ECO:0007669"/>
    <property type="project" value="InterPro"/>
</dbReference>
<dbReference type="GO" id="GO:0006412">
    <property type="term" value="P:translation"/>
    <property type="evidence" value="ECO:0007669"/>
    <property type="project" value="UniProtKB-UniRule"/>
</dbReference>
<dbReference type="CDD" id="cd05797">
    <property type="entry name" value="Ribosomal_L10"/>
    <property type="match status" value="1"/>
</dbReference>
<dbReference type="Gene3D" id="3.30.70.1730">
    <property type="match status" value="1"/>
</dbReference>
<dbReference type="Gene3D" id="6.10.250.2350">
    <property type="match status" value="1"/>
</dbReference>
<dbReference type="HAMAP" id="MF_00362">
    <property type="entry name" value="Ribosomal_uL10"/>
    <property type="match status" value="1"/>
</dbReference>
<dbReference type="InterPro" id="IPR001790">
    <property type="entry name" value="Ribosomal_uL10"/>
</dbReference>
<dbReference type="InterPro" id="IPR043141">
    <property type="entry name" value="Ribosomal_uL10-like_sf"/>
</dbReference>
<dbReference type="InterPro" id="IPR022973">
    <property type="entry name" value="Ribosomal_uL10_bac"/>
</dbReference>
<dbReference type="InterPro" id="IPR047865">
    <property type="entry name" value="Ribosomal_uL10_bac_type"/>
</dbReference>
<dbReference type="InterPro" id="IPR002363">
    <property type="entry name" value="Ribosomal_uL10_CS_bac"/>
</dbReference>
<dbReference type="NCBIfam" id="NF000955">
    <property type="entry name" value="PRK00099.1-1"/>
    <property type="match status" value="1"/>
</dbReference>
<dbReference type="PANTHER" id="PTHR11560">
    <property type="entry name" value="39S RIBOSOMAL PROTEIN L10, MITOCHONDRIAL"/>
    <property type="match status" value="1"/>
</dbReference>
<dbReference type="Pfam" id="PF00466">
    <property type="entry name" value="Ribosomal_L10"/>
    <property type="match status" value="1"/>
</dbReference>
<dbReference type="SUPFAM" id="SSF160369">
    <property type="entry name" value="Ribosomal protein L10-like"/>
    <property type="match status" value="1"/>
</dbReference>
<dbReference type="PROSITE" id="PS01109">
    <property type="entry name" value="RIBOSOMAL_L10"/>
    <property type="match status" value="1"/>
</dbReference>
<reference key="1">
    <citation type="journal article" date="2002" name="Science">
        <title>50 million years of genomic stasis in endosymbiotic bacteria.</title>
        <authorList>
            <person name="Tamas I."/>
            <person name="Klasson L."/>
            <person name="Canbaeck B."/>
            <person name="Naeslund A.K."/>
            <person name="Eriksson A.-S."/>
            <person name="Wernegreen J.J."/>
            <person name="Sandstroem J.P."/>
            <person name="Moran N.A."/>
            <person name="Andersson S.G.E."/>
        </authorList>
    </citation>
    <scope>NUCLEOTIDE SEQUENCE [LARGE SCALE GENOMIC DNA]</scope>
    <source>
        <strain>Sg</strain>
    </source>
</reference>